<gene>
    <name evidence="12 14" type="primary">Sctr</name>
</gene>
<proteinExistence type="evidence at protein level"/>
<feature type="signal peptide" evidence="4">
    <location>
        <begin position="1"/>
        <end position="28"/>
    </location>
</feature>
<feature type="chain" id="PRO_0000043222" description="Secretin receptor">
    <location>
        <begin position="29"/>
        <end position="447"/>
    </location>
</feature>
<feature type="topological domain" description="Extracellular" evidence="13">
    <location>
        <begin position="29"/>
        <end position="140"/>
    </location>
</feature>
<feature type="transmembrane region" description="Helical; Name=1" evidence="3">
    <location>
        <begin position="141"/>
        <end position="166"/>
    </location>
</feature>
<feature type="topological domain" description="Cytoplasmic" evidence="13">
    <location>
        <begin position="167"/>
        <end position="173"/>
    </location>
</feature>
<feature type="transmembrane region" description="Helical; Name=2" evidence="3">
    <location>
        <begin position="174"/>
        <end position="194"/>
    </location>
</feature>
<feature type="topological domain" description="Extracellular" evidence="13">
    <location>
        <begin position="195"/>
        <end position="215"/>
    </location>
</feature>
<feature type="transmembrane region" description="Helical; Name=3" evidence="3">
    <location>
        <begin position="216"/>
        <end position="238"/>
    </location>
</feature>
<feature type="topological domain" description="Cytoplasmic" evidence="13">
    <location>
        <begin position="239"/>
        <end position="253"/>
    </location>
</feature>
<feature type="transmembrane region" description="Helical; Name=4" evidence="3">
    <location>
        <begin position="254"/>
        <end position="275"/>
    </location>
</feature>
<feature type="topological domain" description="Extracellular" evidence="13">
    <location>
        <begin position="276"/>
        <end position="290"/>
    </location>
</feature>
<feature type="transmembrane region" description="Helical; Name=5" evidence="3">
    <location>
        <begin position="291"/>
        <end position="314"/>
    </location>
</feature>
<feature type="topological domain" description="Cytoplasmic" evidence="13">
    <location>
        <begin position="315"/>
        <end position="339"/>
    </location>
</feature>
<feature type="transmembrane region" description="Helical; Name=6" evidence="3">
    <location>
        <begin position="340"/>
        <end position="355"/>
    </location>
</feature>
<feature type="topological domain" description="Extracellular" evidence="13">
    <location>
        <begin position="356"/>
        <end position="366"/>
    </location>
</feature>
<feature type="transmembrane region" description="Helical; Name=7" evidence="3">
    <location>
        <begin position="367"/>
        <end position="390"/>
    </location>
</feature>
<feature type="topological domain" description="Cytoplasmic" evidence="13">
    <location>
        <begin position="391"/>
        <end position="447"/>
    </location>
</feature>
<feature type="region of interest" description="Disordered" evidence="5">
    <location>
        <begin position="423"/>
        <end position="447"/>
    </location>
</feature>
<feature type="compositionally biased region" description="Polar residues" evidence="5">
    <location>
        <begin position="423"/>
        <end position="440"/>
    </location>
</feature>
<feature type="glycosylation site" description="N-linked (GlcNAc...) asparagine" evidence="4">
    <location>
        <position position="71"/>
    </location>
</feature>
<feature type="glycosylation site" description="N-linked (GlcNAc...) asparagine" evidence="4">
    <location>
        <position position="99"/>
    </location>
</feature>
<feature type="glycosylation site" description="N-linked (GlcNAc...) asparagine" evidence="4">
    <location>
        <position position="105"/>
    </location>
</feature>
<feature type="glycosylation site" description="N-linked (GlcNAc...) asparagine" evidence="4">
    <location>
        <position position="127"/>
    </location>
</feature>
<feature type="glycosylation site" description="N-linked (GlcNAc...) asparagine" evidence="4">
    <location>
        <position position="290"/>
    </location>
</feature>
<feature type="disulfide bond" evidence="3">
    <location>
        <begin position="46"/>
        <end position="74"/>
    </location>
</feature>
<feature type="disulfide bond" evidence="3">
    <location>
        <begin position="65"/>
        <end position="106"/>
    </location>
</feature>
<feature type="disulfide bond" evidence="3">
    <location>
        <begin position="88"/>
        <end position="122"/>
    </location>
</feature>
<feature type="disulfide bond" evidence="3">
    <location>
        <begin position="214"/>
        <end position="284"/>
    </location>
</feature>
<organism>
    <name type="scientific">Mus musculus</name>
    <name type="common">Mouse</name>
    <dbReference type="NCBI Taxonomy" id="10090"/>
    <lineage>
        <taxon>Eukaryota</taxon>
        <taxon>Metazoa</taxon>
        <taxon>Chordata</taxon>
        <taxon>Craniata</taxon>
        <taxon>Vertebrata</taxon>
        <taxon>Euteleostomi</taxon>
        <taxon>Mammalia</taxon>
        <taxon>Eutheria</taxon>
        <taxon>Euarchontoglires</taxon>
        <taxon>Glires</taxon>
        <taxon>Rodentia</taxon>
        <taxon>Myomorpha</taxon>
        <taxon>Muroidea</taxon>
        <taxon>Muridae</taxon>
        <taxon>Murinae</taxon>
        <taxon>Mus</taxon>
        <taxon>Mus</taxon>
    </lineage>
</organism>
<accession>Q5FWI2</accession>
<accession>Q80T66</accession>
<comment type="function">
    <text evidence="1 6 7 8 9 11">G protein-coupled receptor activated by secretin (SCT), which is involved in different processes such as regulation of the pH of the duodenal content, food intake and water homeostasis (PubMed:20927047, PubMed:24273196, PubMed:30449620). Ligand binding causes a conformation change that triggers signaling via guanine nucleotide-binding proteins (G proteins) and activates cAMP-dependent pathway (PubMed:30449620). Upon binding to secretin, regulates the pH of the duodenum by (1) inhibiting the secretion of gastric acid from the parietal cells of the stomach and (2) stimulating the production of bicarbonate (NaHCO(3)) from the ductal cells of the pancreas (By similarity). In addition to regulating the pH of the duodenal content, plays a central role in diet induced thermogenesis: acts as a non-sympathetic brown fat (BAT) activator mediating prandial thermogenesis, which consequentially induces satiation (PubMed:30449620). Mechanistically, secretin released by the gut after a meal binds to secretin receptor (SCTR) in brown adipocytes, activating brown fat thermogenesis by stimulating lipolysis, which is sensed in the brain and promotes satiation (PubMed:30449620). Also able to stimulate lipolysis in white adipocytes (PubMed:24273196). Also plays an important role in cellular osmoregulation by regulating renal water reabsorption (PubMed:17283064). Also plays a role in the central nervous system: required for synaptic plasticity (PubMed:17008357).</text>
</comment>
<comment type="subcellular location">
    <subcellularLocation>
        <location evidence="7">Cell membrane</location>
        <topology evidence="3">Multi-pass membrane protein</topology>
    </subcellularLocation>
    <subcellularLocation>
        <location evidence="7">Basolateral cell membrane</location>
        <topology evidence="3">Multi-pass membrane protein</topology>
    </subcellularLocation>
    <text evidence="7">In the renal medulla, localized on the basolateral membranes of cells in the collecting ducts.</text>
</comment>
<comment type="tissue specificity">
    <text evidence="6 7 11">In brain, expressed in the hippocampal CA1 region, the lower layer of cerebral cortex, the anterior olfactory nuclei, the anterior ventrolateral thalamus, the lateral region of hypothalamus, substantia nigra, tegmental area and central nucleus of the inferior colliculus, the ventral supramamillary nucleus and the cerebellum (PubMed:17008357). Expressed in brown adipocytes: expression predominates in mature brown adipocytes (at protein level) (PubMed:30449620). Detected in the renal medulla, where it localized predominantly on the basolateral membranes of cells in the collecting ducts (blue arrow) and the ascending thick segments of the loop of Henle (PubMed:17283064).</text>
</comment>
<comment type="PTM">
    <text evidence="2">Phosphorylated on Ser and Thr residues at the cytoplasmic C-terminus by G protein-coupled receptor kinases (GRKs).</text>
</comment>
<comment type="disruption phenotype">
    <text evidence="6 7 10">Mice are overtly normal and fertile (PubMed:17008357). Mice however display impaired synaptic plasticity in the hippocampus: the number of dendritic spines in the CA1 hippocampal pyramidal cells is slightly reduced and mice show abnormal social behavior (PubMed:17008357). Mice are not hyperphagic and display normal food intake (PubMed:24769669). Following a 12 week high-fat diet, knockout mice gain significantly less weight and exhibit lower body fat content, possibly caused by reduced fat absorption in the intestine (PubMed:24769669). Mice also show mild polydipsia and polyuria; kidney display altered glomerular and tubular morphology (PubMed:17283064).</text>
</comment>
<comment type="similarity">
    <text evidence="13">Belongs to the G-protein coupled receptor 2 family.</text>
</comment>
<keyword id="KW-1003">Cell membrane</keyword>
<keyword id="KW-1015">Disulfide bond</keyword>
<keyword id="KW-0297">G-protein coupled receptor</keyword>
<keyword id="KW-0325">Glycoprotein</keyword>
<keyword id="KW-0472">Membrane</keyword>
<keyword id="KW-0597">Phosphoprotein</keyword>
<keyword id="KW-0675">Receptor</keyword>
<keyword id="KW-1185">Reference proteome</keyword>
<keyword id="KW-0732">Signal</keyword>
<keyword id="KW-0807">Transducer</keyword>
<keyword id="KW-0812">Transmembrane</keyword>
<keyword id="KW-1133">Transmembrane helix</keyword>
<evidence type="ECO:0000250" key="1">
    <source>
        <dbReference type="UniProtKB" id="P11384"/>
    </source>
</evidence>
<evidence type="ECO:0000250" key="2">
    <source>
        <dbReference type="UniProtKB" id="P23811"/>
    </source>
</evidence>
<evidence type="ECO:0000250" key="3">
    <source>
        <dbReference type="UniProtKB" id="P47872"/>
    </source>
</evidence>
<evidence type="ECO:0000255" key="4"/>
<evidence type="ECO:0000256" key="5">
    <source>
        <dbReference type="SAM" id="MobiDB-lite"/>
    </source>
</evidence>
<evidence type="ECO:0000269" key="6">
    <source>
    </source>
</evidence>
<evidence type="ECO:0000269" key="7">
    <source>
    </source>
</evidence>
<evidence type="ECO:0000269" key="8">
    <source>
    </source>
</evidence>
<evidence type="ECO:0000269" key="9">
    <source>
    </source>
</evidence>
<evidence type="ECO:0000269" key="10">
    <source>
    </source>
</evidence>
<evidence type="ECO:0000269" key="11">
    <source>
    </source>
</evidence>
<evidence type="ECO:0000303" key="12">
    <source>
    </source>
</evidence>
<evidence type="ECO:0000305" key="13"/>
<evidence type="ECO:0000312" key="14">
    <source>
        <dbReference type="MGI" id="MGI:2441720"/>
    </source>
</evidence>
<sequence length="447" mass="50932">MLSTMSPRLSLLLLWLLLLINAAHPVGALPRLCDVRRVLLEERAECLRELSEEKKALGPKTASGCERFWDNMSCWPSSALAQTVEVPCPKFLRMFSGRNGSLFRNCTKDGWSETFPRPDLACGVNMNGSFNERRHAYLLKLKVMYTVGYSSSLAMLLVALSILCSFRRLHCTRNYIHMHLFVSFILRALSNFIKDAVLFPADDVTYCDAHRAGCKLVMIFFQYCIMANYAWLLVEGLYLHTLLAISFFSERKCLQAFVLFGWGSPAIFVALWAVTRHFLEDFGCWDINSNASIWWVIRGPVILSIVINFIFFINILRILMRKLRTQETRGNETHHYKRLAKSTLLLIPLFGIHYIVFAFSPEGAMEVQLFFELALGSFQGLVVAVLYCFLNGELEVQKKWRQWHLQEFPLRPVALSNSFSNATNGPTHSTKAGTSEQSRSIPGANVI</sequence>
<protein>
    <recommendedName>
        <fullName evidence="12">Secretin receptor</fullName>
        <shortName>SCT-R</shortName>
    </recommendedName>
</protein>
<dbReference type="EMBL" id="BC089355">
    <property type="protein sequence ID" value="AAH89355.1"/>
    <property type="molecule type" value="mRNA"/>
</dbReference>
<dbReference type="EMBL" id="AY255623">
    <property type="protein sequence ID" value="AAO85135.1"/>
    <property type="molecule type" value="mRNA"/>
</dbReference>
<dbReference type="CCDS" id="CCDS78668.1"/>
<dbReference type="RefSeq" id="NP_001012322.2">
    <property type="nucleotide sequence ID" value="NM_001012322.2"/>
</dbReference>
<dbReference type="RefSeq" id="NP_001298006.1">
    <property type="nucleotide sequence ID" value="NM_001311077.1"/>
</dbReference>
<dbReference type="SMR" id="Q5FWI2"/>
<dbReference type="CORUM" id="Q5FWI2"/>
<dbReference type="FunCoup" id="Q5FWI2">
    <property type="interactions" value="382"/>
</dbReference>
<dbReference type="STRING" id="10090.ENSMUSP00000072660"/>
<dbReference type="GlyCosmos" id="Q5FWI2">
    <property type="glycosylation" value="5 sites, No reported glycans"/>
</dbReference>
<dbReference type="GlyGen" id="Q5FWI2">
    <property type="glycosylation" value="5 sites"/>
</dbReference>
<dbReference type="PhosphoSitePlus" id="Q5FWI2"/>
<dbReference type="PaxDb" id="10090-ENSMUSP00000072660"/>
<dbReference type="Antibodypedia" id="18314">
    <property type="antibodies" value="271 antibodies from 34 providers"/>
</dbReference>
<dbReference type="DNASU" id="319229"/>
<dbReference type="Ensembl" id="ENSMUST00000189037.2">
    <property type="protein sequence ID" value="ENSMUSP00000139932.2"/>
    <property type="gene ID" value="ENSMUSG00000026387.16"/>
</dbReference>
<dbReference type="GeneID" id="319229"/>
<dbReference type="KEGG" id="mmu:319229"/>
<dbReference type="UCSC" id="uc007cjc.1">
    <property type="organism name" value="mouse"/>
</dbReference>
<dbReference type="AGR" id="MGI:2441720"/>
<dbReference type="CTD" id="6344"/>
<dbReference type="MGI" id="MGI:2441720">
    <property type="gene designation" value="Sctr"/>
</dbReference>
<dbReference type="VEuPathDB" id="HostDB:ENSMUSG00000026387"/>
<dbReference type="eggNOG" id="KOG4564">
    <property type="taxonomic scope" value="Eukaryota"/>
</dbReference>
<dbReference type="GeneTree" id="ENSGT00940000160618"/>
<dbReference type="InParanoid" id="Q5FWI2"/>
<dbReference type="OrthoDB" id="5967113at2759"/>
<dbReference type="PhylomeDB" id="Q5FWI2"/>
<dbReference type="Reactome" id="R-MMU-418555">
    <property type="pathway name" value="G alpha (s) signalling events"/>
</dbReference>
<dbReference type="Reactome" id="R-MMU-420092">
    <property type="pathway name" value="Glucagon-type ligand receptors"/>
</dbReference>
<dbReference type="BioGRID-ORCS" id="319229">
    <property type="hits" value="1 hit in 77 CRISPR screens"/>
</dbReference>
<dbReference type="PRO" id="PR:Q5FWI2"/>
<dbReference type="Proteomes" id="UP000000589">
    <property type="component" value="Chromosome 1"/>
</dbReference>
<dbReference type="RNAct" id="Q5FWI2">
    <property type="molecule type" value="protein"/>
</dbReference>
<dbReference type="Bgee" id="ENSMUSG00000026387">
    <property type="expression patterns" value="Expressed in hindlimb stylopod muscle and 47 other cell types or tissues"/>
</dbReference>
<dbReference type="ExpressionAtlas" id="Q5FWI2">
    <property type="expression patterns" value="baseline and differential"/>
</dbReference>
<dbReference type="GO" id="GO:0016323">
    <property type="term" value="C:basolateral plasma membrane"/>
    <property type="evidence" value="ECO:0007669"/>
    <property type="project" value="UniProtKB-SubCell"/>
</dbReference>
<dbReference type="GO" id="GO:0005881">
    <property type="term" value="C:cytoplasmic microtubule"/>
    <property type="evidence" value="ECO:0000250"/>
    <property type="project" value="UniProtKB"/>
</dbReference>
<dbReference type="GO" id="GO:0015055">
    <property type="term" value="F:secretin receptor activity"/>
    <property type="evidence" value="ECO:0000314"/>
    <property type="project" value="UniProtKB"/>
</dbReference>
<dbReference type="GO" id="GO:0007189">
    <property type="term" value="P:adenylate cyclase-activating G protein-coupled receptor signaling pathway"/>
    <property type="evidence" value="ECO:0000314"/>
    <property type="project" value="UniProtKB"/>
</dbReference>
<dbReference type="GO" id="GO:0007166">
    <property type="term" value="P:cell surface receptor signaling pathway"/>
    <property type="evidence" value="ECO:0007669"/>
    <property type="project" value="InterPro"/>
</dbReference>
<dbReference type="GO" id="GO:0002024">
    <property type="term" value="P:diet induced thermogenesis"/>
    <property type="evidence" value="ECO:0000314"/>
    <property type="project" value="UniProtKB"/>
</dbReference>
<dbReference type="GO" id="GO:0009992">
    <property type="term" value="P:intracellular water homeostasis"/>
    <property type="evidence" value="ECO:0000315"/>
    <property type="project" value="UniProtKB"/>
</dbReference>
<dbReference type="GO" id="GO:0050996">
    <property type="term" value="P:positive regulation of lipid catabolic process"/>
    <property type="evidence" value="ECO:0000314"/>
    <property type="project" value="UniProtKB"/>
</dbReference>
<dbReference type="GO" id="GO:0032098">
    <property type="term" value="P:regulation of appetite"/>
    <property type="evidence" value="ECO:0000314"/>
    <property type="project" value="UniProtKB"/>
</dbReference>
<dbReference type="GO" id="GO:0048167">
    <property type="term" value="P:regulation of synaptic plasticity"/>
    <property type="evidence" value="ECO:0000315"/>
    <property type="project" value="UniProtKB"/>
</dbReference>
<dbReference type="GO" id="GO:0070295">
    <property type="term" value="P:renal water absorption"/>
    <property type="evidence" value="ECO:0000315"/>
    <property type="project" value="UniProtKB"/>
</dbReference>
<dbReference type="GO" id="GO:0031667">
    <property type="term" value="P:response to nutrient levels"/>
    <property type="evidence" value="ECO:0000314"/>
    <property type="project" value="UniProtKB"/>
</dbReference>
<dbReference type="CDD" id="cd15275">
    <property type="entry name" value="7tmB1_secretin"/>
    <property type="match status" value="1"/>
</dbReference>
<dbReference type="FunFam" id="4.10.1240.10:FF:000018">
    <property type="entry name" value="Secretin receptor"/>
    <property type="match status" value="1"/>
</dbReference>
<dbReference type="FunFam" id="1.20.1070.10:FF:000032">
    <property type="entry name" value="Vasoactive intestinal polypeptide receptor 1"/>
    <property type="match status" value="1"/>
</dbReference>
<dbReference type="Gene3D" id="4.10.1240.10">
    <property type="entry name" value="GPCR, family 2, extracellular hormone receptor domain"/>
    <property type="match status" value="1"/>
</dbReference>
<dbReference type="Gene3D" id="1.20.1070.10">
    <property type="entry name" value="Rhodopsin 7-helix transmembrane proteins"/>
    <property type="match status" value="1"/>
</dbReference>
<dbReference type="InterPro" id="IPR050332">
    <property type="entry name" value="GPCR_2"/>
</dbReference>
<dbReference type="InterPro" id="IPR017981">
    <property type="entry name" value="GPCR_2-like_7TM"/>
</dbReference>
<dbReference type="InterPro" id="IPR036445">
    <property type="entry name" value="GPCR_2_extracell_dom_sf"/>
</dbReference>
<dbReference type="InterPro" id="IPR001879">
    <property type="entry name" value="GPCR_2_extracellular_dom"/>
</dbReference>
<dbReference type="InterPro" id="IPR000832">
    <property type="entry name" value="GPCR_2_secretin-like"/>
</dbReference>
<dbReference type="InterPro" id="IPR017983">
    <property type="entry name" value="GPCR_2_secretin-like_CS"/>
</dbReference>
<dbReference type="InterPro" id="IPR002144">
    <property type="entry name" value="GPCR_2_secretin_rcpt"/>
</dbReference>
<dbReference type="InterPro" id="IPR047037">
    <property type="entry name" value="Secretin_7TM"/>
</dbReference>
<dbReference type="PANTHER" id="PTHR45620">
    <property type="entry name" value="PDF RECEPTOR-LIKE PROTEIN-RELATED"/>
    <property type="match status" value="1"/>
</dbReference>
<dbReference type="PANTHER" id="PTHR45620:SF13">
    <property type="entry name" value="SECRETIN RECEPTOR"/>
    <property type="match status" value="1"/>
</dbReference>
<dbReference type="Pfam" id="PF00002">
    <property type="entry name" value="7tm_2"/>
    <property type="match status" value="1"/>
</dbReference>
<dbReference type="Pfam" id="PF02793">
    <property type="entry name" value="HRM"/>
    <property type="match status" value="1"/>
</dbReference>
<dbReference type="PRINTS" id="PR00249">
    <property type="entry name" value="GPCRSECRETIN"/>
</dbReference>
<dbReference type="PRINTS" id="PR00490">
    <property type="entry name" value="SECRETINR"/>
</dbReference>
<dbReference type="SMART" id="SM00008">
    <property type="entry name" value="HormR"/>
    <property type="match status" value="1"/>
</dbReference>
<dbReference type="SUPFAM" id="SSF81321">
    <property type="entry name" value="Family A G protein-coupled receptor-like"/>
    <property type="match status" value="1"/>
</dbReference>
<dbReference type="SUPFAM" id="SSF111418">
    <property type="entry name" value="Hormone receptor domain"/>
    <property type="match status" value="1"/>
</dbReference>
<dbReference type="PROSITE" id="PS00649">
    <property type="entry name" value="G_PROTEIN_RECEP_F2_1"/>
    <property type="match status" value="1"/>
</dbReference>
<dbReference type="PROSITE" id="PS50227">
    <property type="entry name" value="G_PROTEIN_RECEP_F2_3"/>
    <property type="match status" value="1"/>
</dbReference>
<dbReference type="PROSITE" id="PS50261">
    <property type="entry name" value="G_PROTEIN_RECEP_F2_4"/>
    <property type="match status" value="1"/>
</dbReference>
<name>SCTR_MOUSE</name>
<reference key="1">
    <citation type="journal article" date="2004" name="Genome Res.">
        <title>The status, quality, and expansion of the NIH full-length cDNA project: the Mammalian Gene Collection (MGC).</title>
        <authorList>
            <consortium name="The MGC Project Team"/>
        </authorList>
    </citation>
    <scope>NUCLEOTIDE SEQUENCE [LARGE SCALE MRNA]</scope>
    <source>
        <strain>C57BL/6J</strain>
        <tissue>Eye</tissue>
    </source>
</reference>
<reference key="2">
    <citation type="journal article" date="2003" name="Proc. Natl. Acad. Sci. U.S.A.">
        <title>The G protein-coupled receptor repertoires of human and mouse.</title>
        <authorList>
            <person name="Vassilatis D.K."/>
            <person name="Hohmann J.G."/>
            <person name="Zeng H."/>
            <person name="Li F."/>
            <person name="Ranchalis J.E."/>
            <person name="Mortrud M.T."/>
            <person name="Brown A."/>
            <person name="Rodriguez S.S."/>
            <person name="Weller J.R."/>
            <person name="Wright A.C."/>
            <person name="Bergmann J.E."/>
            <person name="Gaitanaris G.A."/>
        </authorList>
    </citation>
    <scope>NUCLEOTIDE SEQUENCE [LARGE SCALE MRNA] OF 264-360</scope>
</reference>
<reference key="3">
    <citation type="journal article" date="2006" name="Hum. Mol. Genet.">
        <title>Secretin receptor-deficient mice exhibit impaired synaptic plasticity and social behavior.</title>
        <authorList>
            <person name="Nishijima I."/>
            <person name="Yamagata T."/>
            <person name="Spencer C.M."/>
            <person name="Weeber E.J."/>
            <person name="Alekseyenko O."/>
            <person name="Sweatt J.D."/>
            <person name="Momoi M.Y."/>
            <person name="Ito M."/>
            <person name="Armstrong D.L."/>
            <person name="Nelson D.L."/>
            <person name="Paylor R."/>
            <person name="Bradley A."/>
        </authorList>
    </citation>
    <scope>FUNCTION</scope>
    <scope>TISSUE SPECIFICITY</scope>
    <scope>DISRUPTION PHENOTYPE</scope>
</reference>
<reference key="4">
    <citation type="journal article" date="2007" name="Mol. Cell. Biol.">
        <title>Phenotypes developed in secretin receptor-null mice indicated a role for secretin in regulating renal water reabsorption.</title>
        <authorList>
            <person name="Chu J.Y."/>
            <person name="Chung S.C."/>
            <person name="Lam A.K."/>
            <person name="Tam S."/>
            <person name="Chung S.K."/>
            <person name="Chow B.K."/>
        </authorList>
    </citation>
    <scope>FUNCTION</scope>
    <scope>DISRUPTION PHENOTYPE</scope>
    <scope>SUBCELLULAR LOCATION</scope>
    <scope>TISSUE SPECIFICITY</scope>
</reference>
<reference key="5">
    <citation type="journal article" date="2011" name="Neuropsychopharmacology">
        <title>Central and peripheral administration of secretin inhibits food intake in mice through the activation of the melanocortin system.</title>
        <authorList>
            <person name="Cheng C.Y."/>
            <person name="Chu J.Y."/>
            <person name="Chow B.K."/>
        </authorList>
    </citation>
    <scope>FUNCTION</scope>
</reference>
<reference key="6">
    <citation type="journal article" date="2014" name="FASEB J.">
        <title>Secretin receptor-knockout mice are resistant to high-fat diet-induced obesity and exhibit impaired intestinal lipid absorption.</title>
        <authorList>
            <person name="Sekar R."/>
            <person name="Chow B.K."/>
        </authorList>
    </citation>
    <scope>FUNCTION</scope>
    <scope>DISRUPTION PHENOTYPE</scope>
</reference>
<reference key="7">
    <citation type="journal article" date="2014" name="J. Lipid Res.">
        <title>Lipolytic actions of secretin in mouse adipocytes.</title>
        <authorList>
            <person name="Sekar R."/>
            <person name="Chow B.K."/>
        </authorList>
    </citation>
    <scope>FUNCTION</scope>
</reference>
<reference key="8">
    <citation type="journal article" date="2018" name="Cell">
        <title>Secretin-activated brown fat mediates prandial thermogenesis to induce satiation.</title>
        <authorList>
            <person name="Li Y."/>
            <person name="Schnabl K."/>
            <person name="Gabler S.M."/>
            <person name="Willershaeuser M."/>
            <person name="Reber J."/>
            <person name="Karlas A."/>
            <person name="Laurila S."/>
            <person name="Lahesmaa M."/>
            <person name="U Din M."/>
            <person name="Bast-Habersbrunner A."/>
            <person name="Virtanen K.A."/>
            <person name="Fromme T."/>
            <person name="Bolze F."/>
            <person name="O'Farrell L.S."/>
            <person name="Alsina-Fernandez J."/>
            <person name="Coskun T."/>
            <person name="Ntziachristos V."/>
            <person name="Nuutila P."/>
            <person name="Klingenspor M."/>
        </authorList>
    </citation>
    <scope>FUNCTION</scope>
    <scope>TISSUE SPECIFICITY</scope>
</reference>